<evidence type="ECO:0000250" key="1"/>
<evidence type="ECO:0000255" key="2">
    <source>
        <dbReference type="HAMAP-Rule" id="MF_01608"/>
    </source>
</evidence>
<sequence length="438" mass="49291">MPKIVVVGAVAGGATCASQIRRLDKESDIIIFEKDRDMSFANCALPYVIGEVVEDRRYALAYTPEEFYDRKQITVKTYHEVIAINDERQTVSVLNRKTNEQFEESYDKLILSPGASANSLGFESDITFTLRNLEDTDAIDQFIKANQVDKVLVVGAGYVSLEVLENLYERGLHPTLIHRSDKINKLMDADMNQPILDELDKREIPYRLNEEINAINGNEITFKSGKVEHYDMIIEGVGTHPNSKFIESSNIKLDRKGFIPVNDKFETNVPNIYAIGDIATSHYRHVDLPASVPLAWGAHRAASIVAEQIAGNDTIEFKGFLGNNIVKFFDYTFASVGVKPNELKQFDYKMVEVTQGAHANYYPGNSPLHLRVYYDTSNRQILRAAAVGKEGADKRIDVLSMAMMNQLTVDELTEFEVAYAPPYSHPKDLINMIGYKAK</sequence>
<gene>
    <name evidence="2" type="primary">cdr</name>
    <name type="ordered locus">SACOL0975</name>
</gene>
<accession>Q5HHB4</accession>
<reference key="1">
    <citation type="journal article" date="2005" name="J. Bacteriol.">
        <title>Insights on evolution of virulence and resistance from the complete genome analysis of an early methicillin-resistant Staphylococcus aureus strain and a biofilm-producing methicillin-resistant Staphylococcus epidermidis strain.</title>
        <authorList>
            <person name="Gill S.R."/>
            <person name="Fouts D.E."/>
            <person name="Archer G.L."/>
            <person name="Mongodin E.F."/>
            <person name="DeBoy R.T."/>
            <person name="Ravel J."/>
            <person name="Paulsen I.T."/>
            <person name="Kolonay J.F."/>
            <person name="Brinkac L.M."/>
            <person name="Beanan M.J."/>
            <person name="Dodson R.J."/>
            <person name="Daugherty S.C."/>
            <person name="Madupu R."/>
            <person name="Angiuoli S.V."/>
            <person name="Durkin A.S."/>
            <person name="Haft D.H."/>
            <person name="Vamathevan J.J."/>
            <person name="Khouri H."/>
            <person name="Utterback T.R."/>
            <person name="Lee C."/>
            <person name="Dimitrov G."/>
            <person name="Jiang L."/>
            <person name="Qin H."/>
            <person name="Weidman J."/>
            <person name="Tran K."/>
            <person name="Kang K.H."/>
            <person name="Hance I.R."/>
            <person name="Nelson K.E."/>
            <person name="Fraser C.M."/>
        </authorList>
    </citation>
    <scope>NUCLEOTIDE SEQUENCE [LARGE SCALE GENOMIC DNA]</scope>
    <source>
        <strain>COL</strain>
    </source>
</reference>
<organism>
    <name type="scientific">Staphylococcus aureus (strain COL)</name>
    <dbReference type="NCBI Taxonomy" id="93062"/>
    <lineage>
        <taxon>Bacteria</taxon>
        <taxon>Bacillati</taxon>
        <taxon>Bacillota</taxon>
        <taxon>Bacilli</taxon>
        <taxon>Bacillales</taxon>
        <taxon>Staphylococcaceae</taxon>
        <taxon>Staphylococcus</taxon>
    </lineage>
</organism>
<keyword id="KW-0274">FAD</keyword>
<keyword id="KW-0285">Flavoprotein</keyword>
<keyword id="KW-0521">NADP</keyword>
<keyword id="KW-0560">Oxidoreductase</keyword>
<keyword id="KW-0676">Redox-active center</keyword>
<dbReference type="EC" id="1.8.1.14" evidence="2"/>
<dbReference type="EMBL" id="CP000046">
    <property type="protein sequence ID" value="AAW37942.1"/>
    <property type="molecule type" value="Genomic_DNA"/>
</dbReference>
<dbReference type="RefSeq" id="WP_001124519.1">
    <property type="nucleotide sequence ID" value="NC_002951.2"/>
</dbReference>
<dbReference type="SMR" id="Q5HHB4"/>
<dbReference type="KEGG" id="sac:SACOL0975"/>
<dbReference type="HOGENOM" id="CLU_003291_1_3_9"/>
<dbReference type="Proteomes" id="UP000000530">
    <property type="component" value="Chromosome"/>
</dbReference>
<dbReference type="GO" id="GO:0050451">
    <property type="term" value="F:CoA-disulfide reductase (NADPH) activity"/>
    <property type="evidence" value="ECO:0007669"/>
    <property type="project" value="UniProtKB-UniRule"/>
</dbReference>
<dbReference type="GO" id="GO:0050660">
    <property type="term" value="F:flavin adenine dinucleotide binding"/>
    <property type="evidence" value="ECO:0007669"/>
    <property type="project" value="UniProtKB-UniRule"/>
</dbReference>
<dbReference type="GO" id="GO:0050661">
    <property type="term" value="F:NADP binding"/>
    <property type="evidence" value="ECO:0007669"/>
    <property type="project" value="UniProtKB-UniRule"/>
</dbReference>
<dbReference type="GO" id="GO:0003756">
    <property type="term" value="F:protein disulfide isomerase activity"/>
    <property type="evidence" value="ECO:0007669"/>
    <property type="project" value="UniProtKB-UniRule"/>
</dbReference>
<dbReference type="Gene3D" id="3.30.390.30">
    <property type="match status" value="1"/>
</dbReference>
<dbReference type="Gene3D" id="3.50.50.60">
    <property type="entry name" value="FAD/NAD(P)-binding domain"/>
    <property type="match status" value="2"/>
</dbReference>
<dbReference type="HAMAP" id="MF_01608">
    <property type="entry name" value="CoA_diS_reduct"/>
    <property type="match status" value="1"/>
</dbReference>
<dbReference type="InterPro" id="IPR017758">
    <property type="entry name" value="CoA_disulphide_reductase"/>
</dbReference>
<dbReference type="InterPro" id="IPR023536">
    <property type="entry name" value="CoA_disulphide_reductase_staph"/>
</dbReference>
<dbReference type="InterPro" id="IPR050260">
    <property type="entry name" value="FAD-bd_OxRdtase"/>
</dbReference>
<dbReference type="InterPro" id="IPR036188">
    <property type="entry name" value="FAD/NAD-bd_sf"/>
</dbReference>
<dbReference type="InterPro" id="IPR023753">
    <property type="entry name" value="FAD/NAD-binding_dom"/>
</dbReference>
<dbReference type="InterPro" id="IPR016156">
    <property type="entry name" value="FAD/NAD-linked_Rdtase_dimer_sf"/>
</dbReference>
<dbReference type="InterPro" id="IPR004099">
    <property type="entry name" value="Pyr_nucl-diS_OxRdtase_dimer"/>
</dbReference>
<dbReference type="NCBIfam" id="TIGR03385">
    <property type="entry name" value="CoA_CoA_reduc"/>
    <property type="match status" value="1"/>
</dbReference>
<dbReference type="NCBIfam" id="NF010037">
    <property type="entry name" value="PRK13512.1"/>
    <property type="match status" value="1"/>
</dbReference>
<dbReference type="PANTHER" id="PTHR43429:SF1">
    <property type="entry name" value="NAD(P)H SULFUR OXIDOREDUCTASE (COA-DEPENDENT)"/>
    <property type="match status" value="1"/>
</dbReference>
<dbReference type="PANTHER" id="PTHR43429">
    <property type="entry name" value="PYRIDINE NUCLEOTIDE-DISULFIDE OXIDOREDUCTASE DOMAIN-CONTAINING"/>
    <property type="match status" value="1"/>
</dbReference>
<dbReference type="Pfam" id="PF07992">
    <property type="entry name" value="Pyr_redox_2"/>
    <property type="match status" value="1"/>
</dbReference>
<dbReference type="Pfam" id="PF02852">
    <property type="entry name" value="Pyr_redox_dim"/>
    <property type="match status" value="1"/>
</dbReference>
<dbReference type="PRINTS" id="PR00368">
    <property type="entry name" value="FADPNR"/>
</dbReference>
<dbReference type="PRINTS" id="PR00411">
    <property type="entry name" value="PNDRDTASEI"/>
</dbReference>
<dbReference type="SUPFAM" id="SSF51905">
    <property type="entry name" value="FAD/NAD(P)-binding domain"/>
    <property type="match status" value="1"/>
</dbReference>
<dbReference type="SUPFAM" id="SSF55424">
    <property type="entry name" value="FAD/NAD-linked reductases, dimerisation (C-terminal) domain"/>
    <property type="match status" value="1"/>
</dbReference>
<comment type="function">
    <text evidence="2">Catalyzes specifically the NADPH-dependent reduction of coenzyme A disulfide.</text>
</comment>
<comment type="catalytic activity">
    <reaction evidence="2">
        <text>NADP(+) + 2 CoA = CoA-disulfide + NADPH + H(+)</text>
        <dbReference type="Rhea" id="RHEA:14705"/>
        <dbReference type="ChEBI" id="CHEBI:15378"/>
        <dbReference type="ChEBI" id="CHEBI:57287"/>
        <dbReference type="ChEBI" id="CHEBI:57783"/>
        <dbReference type="ChEBI" id="CHEBI:58349"/>
        <dbReference type="ChEBI" id="CHEBI:62209"/>
        <dbReference type="EC" id="1.8.1.14"/>
    </reaction>
</comment>
<comment type="cofactor">
    <cofactor evidence="2">
        <name>FAD</name>
        <dbReference type="ChEBI" id="CHEBI:57692"/>
    </cofactor>
    <text evidence="2">Binds 1 FAD per subunit.</text>
</comment>
<comment type="subunit">
    <text evidence="2">Homodimer.</text>
</comment>
<comment type="domain">
    <text evidence="2">Contains 2 FAD binding domains and a single NADPH binding domain.</text>
</comment>
<comment type="miscellaneous">
    <text evidence="2">Reduction of disulfides occurs by a thiol-disulfide exchange reaction, but involves only a single catalytic cysteine residue that forms a stable mixed disulfide with CoA during catalysis.</text>
</comment>
<comment type="similarity">
    <text evidence="2">Belongs to the class-III pyridine nucleotide-disulfide oxidoreductase family.</text>
</comment>
<protein>
    <recommendedName>
        <fullName evidence="2">Coenzyme A disulfide reductase</fullName>
        <shortName evidence="2">CoA-disulfide reductase</shortName>
        <shortName evidence="2">CoADR</shortName>
        <ecNumber evidence="2">1.8.1.14</ecNumber>
    </recommendedName>
</protein>
<proteinExistence type="inferred from homology"/>
<name>CDR_STAAC</name>
<feature type="initiator methionine" description="Removed" evidence="1">
    <location>
        <position position="1"/>
    </location>
</feature>
<feature type="chain" id="PRO_0000184689" description="Coenzyme A disulfide reductase">
    <location>
        <begin position="2"/>
        <end position="438"/>
    </location>
</feature>
<feature type="active site" description="Nucleophile" evidence="2">
    <location>
        <position position="43"/>
    </location>
</feature>
<feature type="active site" description="Redox-active" evidence="2">
    <location>
        <position position="43"/>
    </location>
</feature>
<feature type="binding site" evidence="2">
    <location>
        <begin position="8"/>
        <end position="33"/>
    </location>
    <ligand>
        <name>FAD</name>
        <dbReference type="ChEBI" id="CHEBI:57692"/>
    </ligand>
</feature>
<feature type="binding site" evidence="2">
    <location>
        <position position="15"/>
    </location>
    <ligand>
        <name>substrate</name>
    </ligand>
</feature>
<feature type="binding site" evidence="2">
    <location>
        <position position="19"/>
    </location>
    <ligand>
        <name>substrate</name>
    </ligand>
</feature>
<feature type="binding site" evidence="2">
    <location>
        <position position="22"/>
    </location>
    <ligand>
        <name>substrate</name>
    </ligand>
</feature>
<feature type="binding site" evidence="2">
    <location>
        <position position="39"/>
    </location>
    <ligand>
        <name>substrate</name>
    </ligand>
</feature>
<feature type="binding site" evidence="2">
    <location>
        <position position="42"/>
    </location>
    <ligand>
        <name>substrate</name>
    </ligand>
</feature>
<feature type="binding site" evidence="2">
    <location>
        <position position="71"/>
    </location>
    <ligand>
        <name>substrate</name>
    </ligand>
</feature>
<feature type="binding site" evidence="2">
    <location>
        <begin position="151"/>
        <end position="166"/>
    </location>
    <ligand>
        <name>NADP(+)</name>
        <dbReference type="ChEBI" id="CHEBI:58349"/>
    </ligand>
</feature>
<feature type="binding site" evidence="2">
    <location>
        <begin position="267"/>
        <end position="277"/>
    </location>
    <ligand>
        <name>FAD</name>
        <dbReference type="ChEBI" id="CHEBI:57692"/>
    </ligand>
</feature>
<feature type="binding site" evidence="2">
    <location>
        <position position="299"/>
    </location>
    <ligand>
        <name>substrate</name>
    </ligand>
</feature>
<feature type="binding site" evidence="2">
    <location>
        <position position="419"/>
    </location>
    <ligand>
        <name>FAD</name>
        <dbReference type="ChEBI" id="CHEBI:57692"/>
    </ligand>
</feature>
<feature type="binding site" evidence="2">
    <location>
        <position position="427"/>
    </location>
    <ligand>
        <name>substrate</name>
    </ligand>
</feature>